<gene>
    <name evidence="1" type="primary">mnmG</name>
    <name evidence="1" type="synonym">gidA</name>
    <name type="ordered locus">Ldb2214</name>
</gene>
<evidence type="ECO:0000255" key="1">
    <source>
        <dbReference type="HAMAP-Rule" id="MF_00129"/>
    </source>
</evidence>
<evidence type="ECO:0000256" key="2">
    <source>
        <dbReference type="SAM" id="MobiDB-lite"/>
    </source>
</evidence>
<reference key="1">
    <citation type="journal article" date="2006" name="Proc. Natl. Acad. Sci. U.S.A.">
        <title>The complete genome sequence of Lactobacillus bulgaricus reveals extensive and ongoing reductive evolution.</title>
        <authorList>
            <person name="van de Guchte M."/>
            <person name="Penaud S."/>
            <person name="Grimaldi C."/>
            <person name="Barbe V."/>
            <person name="Bryson K."/>
            <person name="Nicolas P."/>
            <person name="Robert C."/>
            <person name="Oztas S."/>
            <person name="Mangenot S."/>
            <person name="Couloux A."/>
            <person name="Loux V."/>
            <person name="Dervyn R."/>
            <person name="Bossy R."/>
            <person name="Bolotin A."/>
            <person name="Batto J.-M."/>
            <person name="Walunas T."/>
            <person name="Gibrat J.-F."/>
            <person name="Bessieres P."/>
            <person name="Weissenbach J."/>
            <person name="Ehrlich S.D."/>
            <person name="Maguin E."/>
        </authorList>
    </citation>
    <scope>NUCLEOTIDE SEQUENCE [LARGE SCALE GENOMIC DNA]</scope>
    <source>
        <strain>ATCC 11842 / DSM 20081 / BCRC 10696 / JCM 1002 / NBRC 13953 / NCIMB 11778 / NCTC 12712 / WDCM 00102 / Lb 14</strain>
    </source>
</reference>
<comment type="function">
    <text evidence="1">NAD-binding protein involved in the addition of a carboxymethylaminomethyl (cmnm) group at the wobble position (U34) of certain tRNAs, forming tRNA-cmnm(5)s(2)U34.</text>
</comment>
<comment type="cofactor">
    <cofactor evidence="1">
        <name>FAD</name>
        <dbReference type="ChEBI" id="CHEBI:57692"/>
    </cofactor>
</comment>
<comment type="subunit">
    <text evidence="1">Homodimer. Heterotetramer of two MnmE and two MnmG subunits.</text>
</comment>
<comment type="subcellular location">
    <subcellularLocation>
        <location evidence="1">Cytoplasm</location>
    </subcellularLocation>
</comment>
<comment type="similarity">
    <text evidence="1">Belongs to the MnmG family.</text>
</comment>
<keyword id="KW-0963">Cytoplasm</keyword>
<keyword id="KW-0274">FAD</keyword>
<keyword id="KW-0285">Flavoprotein</keyword>
<keyword id="KW-0520">NAD</keyword>
<keyword id="KW-1185">Reference proteome</keyword>
<keyword id="KW-0819">tRNA processing</keyword>
<accession>Q1G7Z5</accession>
<protein>
    <recommendedName>
        <fullName evidence="1">tRNA uridine 5-carboxymethylaminomethyl modification enzyme MnmG</fullName>
    </recommendedName>
    <alternativeName>
        <fullName evidence="1">Glucose-inhibited division protein A</fullName>
    </alternativeName>
</protein>
<name>MNMG_LACDA</name>
<organism>
    <name type="scientific">Lactobacillus delbrueckii subsp. bulgaricus (strain ATCC 11842 / DSM 20081 / BCRC 10696 / JCM 1002 / NBRC 13953 / NCIMB 11778 / NCTC 12712 / WDCM 00102 / Lb 14)</name>
    <dbReference type="NCBI Taxonomy" id="390333"/>
    <lineage>
        <taxon>Bacteria</taxon>
        <taxon>Bacillati</taxon>
        <taxon>Bacillota</taxon>
        <taxon>Bacilli</taxon>
        <taxon>Lactobacillales</taxon>
        <taxon>Lactobacillaceae</taxon>
        <taxon>Lactobacillus</taxon>
    </lineage>
</organism>
<feature type="chain" id="PRO_1000016613" description="tRNA uridine 5-carboxymethylaminomethyl modification enzyme MnmG">
    <location>
        <begin position="1"/>
        <end position="631"/>
    </location>
</feature>
<feature type="region of interest" description="Disordered" evidence="2">
    <location>
        <begin position="214"/>
        <end position="233"/>
    </location>
</feature>
<feature type="binding site" evidence="1">
    <location>
        <begin position="15"/>
        <end position="20"/>
    </location>
    <ligand>
        <name>FAD</name>
        <dbReference type="ChEBI" id="CHEBI:57692"/>
    </ligand>
</feature>
<feature type="binding site" evidence="1">
    <location>
        <begin position="276"/>
        <end position="290"/>
    </location>
    <ligand>
        <name>NAD(+)</name>
        <dbReference type="ChEBI" id="CHEBI:57540"/>
    </ligand>
</feature>
<dbReference type="EMBL" id="CR954253">
    <property type="protein sequence ID" value="CAI98938.1"/>
    <property type="molecule type" value="Genomic_DNA"/>
</dbReference>
<dbReference type="RefSeq" id="WP_003623640.1">
    <property type="nucleotide sequence ID" value="NZ_JQAV01000011.1"/>
</dbReference>
<dbReference type="SMR" id="Q1G7Z5"/>
<dbReference type="STRING" id="390333.Ldb2214"/>
<dbReference type="KEGG" id="ldb:Ldb2214"/>
<dbReference type="PATRIC" id="fig|390333.13.peg.524"/>
<dbReference type="eggNOG" id="COG0445">
    <property type="taxonomic scope" value="Bacteria"/>
</dbReference>
<dbReference type="HOGENOM" id="CLU_007831_2_2_9"/>
<dbReference type="BioCyc" id="LDEL390333:LDB_RS09675-MONOMER"/>
<dbReference type="Proteomes" id="UP000001259">
    <property type="component" value="Chromosome"/>
</dbReference>
<dbReference type="GO" id="GO:0005829">
    <property type="term" value="C:cytosol"/>
    <property type="evidence" value="ECO:0007669"/>
    <property type="project" value="TreeGrafter"/>
</dbReference>
<dbReference type="GO" id="GO:0050660">
    <property type="term" value="F:flavin adenine dinucleotide binding"/>
    <property type="evidence" value="ECO:0007669"/>
    <property type="project" value="UniProtKB-UniRule"/>
</dbReference>
<dbReference type="GO" id="GO:0030488">
    <property type="term" value="P:tRNA methylation"/>
    <property type="evidence" value="ECO:0007669"/>
    <property type="project" value="TreeGrafter"/>
</dbReference>
<dbReference type="GO" id="GO:0002098">
    <property type="term" value="P:tRNA wobble uridine modification"/>
    <property type="evidence" value="ECO:0007669"/>
    <property type="project" value="InterPro"/>
</dbReference>
<dbReference type="FunFam" id="1.10.10.1800:FF:000001">
    <property type="entry name" value="tRNA uridine 5-carboxymethylaminomethyl modification enzyme MnmG"/>
    <property type="match status" value="1"/>
</dbReference>
<dbReference type="FunFam" id="1.10.150.570:FF:000001">
    <property type="entry name" value="tRNA uridine 5-carboxymethylaminomethyl modification enzyme MnmG"/>
    <property type="match status" value="1"/>
</dbReference>
<dbReference type="FunFam" id="3.50.50.60:FF:000002">
    <property type="entry name" value="tRNA uridine 5-carboxymethylaminomethyl modification enzyme MnmG"/>
    <property type="match status" value="1"/>
</dbReference>
<dbReference type="FunFam" id="3.50.50.60:FF:000063">
    <property type="entry name" value="tRNA uridine 5-carboxymethylaminomethyl modification enzyme MnmG"/>
    <property type="match status" value="1"/>
</dbReference>
<dbReference type="Gene3D" id="3.50.50.60">
    <property type="entry name" value="FAD/NAD(P)-binding domain"/>
    <property type="match status" value="2"/>
</dbReference>
<dbReference type="Gene3D" id="1.10.150.570">
    <property type="entry name" value="GidA associated domain, C-terminal subdomain"/>
    <property type="match status" value="1"/>
</dbReference>
<dbReference type="Gene3D" id="1.10.10.1800">
    <property type="entry name" value="tRNA uridine 5-carboxymethylaminomethyl modification enzyme MnmG/GidA"/>
    <property type="match status" value="1"/>
</dbReference>
<dbReference type="HAMAP" id="MF_00129">
    <property type="entry name" value="MnmG_GidA"/>
    <property type="match status" value="1"/>
</dbReference>
<dbReference type="InterPro" id="IPR036188">
    <property type="entry name" value="FAD/NAD-bd_sf"/>
</dbReference>
<dbReference type="InterPro" id="IPR049312">
    <property type="entry name" value="GIDA_C_N"/>
</dbReference>
<dbReference type="InterPro" id="IPR004416">
    <property type="entry name" value="MnmG"/>
</dbReference>
<dbReference type="InterPro" id="IPR002218">
    <property type="entry name" value="MnmG-rel"/>
</dbReference>
<dbReference type="InterPro" id="IPR020595">
    <property type="entry name" value="MnmG-rel_CS"/>
</dbReference>
<dbReference type="InterPro" id="IPR026904">
    <property type="entry name" value="MnmG_C"/>
</dbReference>
<dbReference type="InterPro" id="IPR047001">
    <property type="entry name" value="MnmG_C_subdom"/>
</dbReference>
<dbReference type="InterPro" id="IPR044920">
    <property type="entry name" value="MnmG_C_subdom_sf"/>
</dbReference>
<dbReference type="InterPro" id="IPR040131">
    <property type="entry name" value="MnmG_N"/>
</dbReference>
<dbReference type="NCBIfam" id="TIGR00136">
    <property type="entry name" value="mnmG_gidA"/>
    <property type="match status" value="1"/>
</dbReference>
<dbReference type="PANTHER" id="PTHR11806">
    <property type="entry name" value="GLUCOSE INHIBITED DIVISION PROTEIN A"/>
    <property type="match status" value="1"/>
</dbReference>
<dbReference type="PANTHER" id="PTHR11806:SF0">
    <property type="entry name" value="PROTEIN MTO1 HOMOLOG, MITOCHONDRIAL"/>
    <property type="match status" value="1"/>
</dbReference>
<dbReference type="Pfam" id="PF01134">
    <property type="entry name" value="GIDA"/>
    <property type="match status" value="1"/>
</dbReference>
<dbReference type="Pfam" id="PF21680">
    <property type="entry name" value="GIDA_C_1st"/>
    <property type="match status" value="1"/>
</dbReference>
<dbReference type="Pfam" id="PF13932">
    <property type="entry name" value="SAM_GIDA_C"/>
    <property type="match status" value="1"/>
</dbReference>
<dbReference type="PRINTS" id="PR00368">
    <property type="entry name" value="FADPNR"/>
</dbReference>
<dbReference type="PRINTS" id="PR00411">
    <property type="entry name" value="PNDRDTASEI"/>
</dbReference>
<dbReference type="SMART" id="SM01228">
    <property type="entry name" value="GIDA_assoc_3"/>
    <property type="match status" value="1"/>
</dbReference>
<dbReference type="SUPFAM" id="SSF51905">
    <property type="entry name" value="FAD/NAD(P)-binding domain"/>
    <property type="match status" value="1"/>
</dbReference>
<dbReference type="PROSITE" id="PS01280">
    <property type="entry name" value="GIDA_1"/>
    <property type="match status" value="1"/>
</dbReference>
<dbReference type="PROSITE" id="PS01281">
    <property type="entry name" value="GIDA_2"/>
    <property type="match status" value="1"/>
</dbReference>
<sequence>MKTYVSNEYDVIVVGAGHAGCEAALASARMGEKTLLLTISLDMVAFMPCNPSVGGPAKGTVVREIDALGGEMGKNIDKTYIQMRMLNTGKGPAVRALRAQADKWDYHEEMKRTIENTPNLTLRQAVVDDLIVEDGECRGVVTNTGARYRAKSVVLTTGTAARGRIFIGELNYSSGPNNTIPAIKLSESLERLGFKLRRFKTGTPPRVNRHTIDYSKTEEEPGDKEPRHFSFTSRDEDYLTDQTSCWMTYTNPKTHEIINENLDRSPMFSGDIVGVGPRYCPSIETKVVRFADKDRHQIFLEPEGRKTEEIYVGDFSTSMPEEVQLEMLHTVAGLEKVEMMRPGYAIEYDVVDPWQLTHTLETKRIKHLYMAGQMNGTSGYEEAAGQGLIAGINAALSAEGKPAFTLGRDEAYIGVLIDDLVTKGTEEPYRLLTSRAEYRLLLRHDNADLRLTEKGHDLGLIDDDRYAEFLAKKELIQEDLDRLGEITVHPTIAVNEYLAGLGQTDLNGGVKADVFLRRPRVTVEDVERLTGQKLAGDRYVKEQVEIDIKYAGYIKKQEIQVARLRRQEAKKIPKDIDYDQIEGLATEAREKLAKIRPETLAQAERISGVNPADLAILSVYVQNGKYAKVQK</sequence>
<proteinExistence type="inferred from homology"/>